<dbReference type="EMBL" id="CP001001">
    <property type="protein sequence ID" value="ACB24209.1"/>
    <property type="molecule type" value="Genomic_DNA"/>
</dbReference>
<dbReference type="RefSeq" id="WP_012319183.1">
    <property type="nucleotide sequence ID" value="NC_010505.1"/>
</dbReference>
<dbReference type="SMR" id="B1LWS2"/>
<dbReference type="STRING" id="426355.Mrad2831_2214"/>
<dbReference type="GeneID" id="6138246"/>
<dbReference type="KEGG" id="mrd:Mrad2831_2214"/>
<dbReference type="eggNOG" id="COG0049">
    <property type="taxonomic scope" value="Bacteria"/>
</dbReference>
<dbReference type="HOGENOM" id="CLU_072226_1_1_5"/>
<dbReference type="OrthoDB" id="9807653at2"/>
<dbReference type="Proteomes" id="UP000006589">
    <property type="component" value="Chromosome"/>
</dbReference>
<dbReference type="GO" id="GO:0015935">
    <property type="term" value="C:small ribosomal subunit"/>
    <property type="evidence" value="ECO:0007669"/>
    <property type="project" value="InterPro"/>
</dbReference>
<dbReference type="GO" id="GO:0019843">
    <property type="term" value="F:rRNA binding"/>
    <property type="evidence" value="ECO:0007669"/>
    <property type="project" value="UniProtKB-UniRule"/>
</dbReference>
<dbReference type="GO" id="GO:0003735">
    <property type="term" value="F:structural constituent of ribosome"/>
    <property type="evidence" value="ECO:0007669"/>
    <property type="project" value="InterPro"/>
</dbReference>
<dbReference type="GO" id="GO:0000049">
    <property type="term" value="F:tRNA binding"/>
    <property type="evidence" value="ECO:0007669"/>
    <property type="project" value="UniProtKB-UniRule"/>
</dbReference>
<dbReference type="GO" id="GO:0006412">
    <property type="term" value="P:translation"/>
    <property type="evidence" value="ECO:0007669"/>
    <property type="project" value="UniProtKB-UniRule"/>
</dbReference>
<dbReference type="CDD" id="cd14869">
    <property type="entry name" value="uS7_Bacteria"/>
    <property type="match status" value="1"/>
</dbReference>
<dbReference type="FunFam" id="1.10.455.10:FF:000001">
    <property type="entry name" value="30S ribosomal protein S7"/>
    <property type="match status" value="1"/>
</dbReference>
<dbReference type="Gene3D" id="1.10.455.10">
    <property type="entry name" value="Ribosomal protein S7 domain"/>
    <property type="match status" value="1"/>
</dbReference>
<dbReference type="HAMAP" id="MF_00480_B">
    <property type="entry name" value="Ribosomal_uS7_B"/>
    <property type="match status" value="1"/>
</dbReference>
<dbReference type="InterPro" id="IPR000235">
    <property type="entry name" value="Ribosomal_uS7"/>
</dbReference>
<dbReference type="InterPro" id="IPR005717">
    <property type="entry name" value="Ribosomal_uS7_bac/org-type"/>
</dbReference>
<dbReference type="InterPro" id="IPR020606">
    <property type="entry name" value="Ribosomal_uS7_CS"/>
</dbReference>
<dbReference type="InterPro" id="IPR023798">
    <property type="entry name" value="Ribosomal_uS7_dom"/>
</dbReference>
<dbReference type="InterPro" id="IPR036823">
    <property type="entry name" value="Ribosomal_uS7_dom_sf"/>
</dbReference>
<dbReference type="NCBIfam" id="TIGR01029">
    <property type="entry name" value="rpsG_bact"/>
    <property type="match status" value="1"/>
</dbReference>
<dbReference type="PANTHER" id="PTHR11205">
    <property type="entry name" value="RIBOSOMAL PROTEIN S7"/>
    <property type="match status" value="1"/>
</dbReference>
<dbReference type="Pfam" id="PF00177">
    <property type="entry name" value="Ribosomal_S7"/>
    <property type="match status" value="1"/>
</dbReference>
<dbReference type="PIRSF" id="PIRSF002122">
    <property type="entry name" value="RPS7p_RPS7a_RPS5e_RPS7o"/>
    <property type="match status" value="1"/>
</dbReference>
<dbReference type="SUPFAM" id="SSF47973">
    <property type="entry name" value="Ribosomal protein S7"/>
    <property type="match status" value="1"/>
</dbReference>
<dbReference type="PROSITE" id="PS00052">
    <property type="entry name" value="RIBOSOMAL_S7"/>
    <property type="match status" value="1"/>
</dbReference>
<reference key="1">
    <citation type="submission" date="2008-03" db="EMBL/GenBank/DDBJ databases">
        <title>Complete sequence of chromosome of Methylobacterium radiotolerans JCM 2831.</title>
        <authorList>
            <consortium name="US DOE Joint Genome Institute"/>
            <person name="Copeland A."/>
            <person name="Lucas S."/>
            <person name="Lapidus A."/>
            <person name="Glavina del Rio T."/>
            <person name="Dalin E."/>
            <person name="Tice H."/>
            <person name="Bruce D."/>
            <person name="Goodwin L."/>
            <person name="Pitluck S."/>
            <person name="Kiss H."/>
            <person name="Brettin T."/>
            <person name="Detter J.C."/>
            <person name="Han C."/>
            <person name="Kuske C.R."/>
            <person name="Schmutz J."/>
            <person name="Larimer F."/>
            <person name="Land M."/>
            <person name="Hauser L."/>
            <person name="Kyrpides N."/>
            <person name="Mikhailova N."/>
            <person name="Marx C.J."/>
            <person name="Richardson P."/>
        </authorList>
    </citation>
    <scope>NUCLEOTIDE SEQUENCE [LARGE SCALE GENOMIC DNA]</scope>
    <source>
        <strain>ATCC 27329 / DSM 1819 / JCM 2831 / NBRC 15690 / NCIMB 10815 / 0-1</strain>
    </source>
</reference>
<proteinExistence type="inferred from homology"/>
<feature type="chain" id="PRO_1000125968" description="Small ribosomal subunit protein uS7">
    <location>
        <begin position="1"/>
        <end position="156"/>
    </location>
</feature>
<keyword id="KW-0687">Ribonucleoprotein</keyword>
<keyword id="KW-0689">Ribosomal protein</keyword>
<keyword id="KW-0694">RNA-binding</keyword>
<keyword id="KW-0699">rRNA-binding</keyword>
<keyword id="KW-0820">tRNA-binding</keyword>
<accession>B1LWS2</accession>
<sequence>MSRRHSAEKREIIPDPKYGDVVLTKFMNSIMYEGKKSTAERIVYGAFDIVENRARANPIEVFRAALDNVAPMIEVRSRRVGGATYQVPVEVRTERRQALAIRWLIQAARSRNDRTMVERLSAELLDAANNRGNAVKKREDTHRMAEANRAFSHYRW</sequence>
<name>RS7_METRJ</name>
<protein>
    <recommendedName>
        <fullName evidence="1">Small ribosomal subunit protein uS7</fullName>
    </recommendedName>
    <alternativeName>
        <fullName evidence="2">30S ribosomal protein S7</fullName>
    </alternativeName>
</protein>
<organism>
    <name type="scientific">Methylobacterium radiotolerans (strain ATCC 27329 / DSM 1819 / JCM 2831 / NBRC 15690 / NCIMB 10815 / 0-1)</name>
    <dbReference type="NCBI Taxonomy" id="426355"/>
    <lineage>
        <taxon>Bacteria</taxon>
        <taxon>Pseudomonadati</taxon>
        <taxon>Pseudomonadota</taxon>
        <taxon>Alphaproteobacteria</taxon>
        <taxon>Hyphomicrobiales</taxon>
        <taxon>Methylobacteriaceae</taxon>
        <taxon>Methylobacterium</taxon>
    </lineage>
</organism>
<evidence type="ECO:0000255" key="1">
    <source>
        <dbReference type="HAMAP-Rule" id="MF_00480"/>
    </source>
</evidence>
<evidence type="ECO:0000305" key="2"/>
<gene>
    <name evidence="1" type="primary">rpsG</name>
    <name type="ordered locus">Mrad2831_2214</name>
</gene>
<comment type="function">
    <text evidence="1">One of the primary rRNA binding proteins, it binds directly to 16S rRNA where it nucleates assembly of the head domain of the 30S subunit. Is located at the subunit interface close to the decoding center, probably blocks exit of the E-site tRNA.</text>
</comment>
<comment type="subunit">
    <text evidence="1">Part of the 30S ribosomal subunit. Contacts proteins S9 and S11.</text>
</comment>
<comment type="similarity">
    <text evidence="1">Belongs to the universal ribosomal protein uS7 family.</text>
</comment>